<organism>
    <name type="scientific">Arabidopsis thaliana</name>
    <name type="common">Mouse-ear cress</name>
    <dbReference type="NCBI Taxonomy" id="3702"/>
    <lineage>
        <taxon>Eukaryota</taxon>
        <taxon>Viridiplantae</taxon>
        <taxon>Streptophyta</taxon>
        <taxon>Embryophyta</taxon>
        <taxon>Tracheophyta</taxon>
        <taxon>Spermatophyta</taxon>
        <taxon>Magnoliopsida</taxon>
        <taxon>eudicotyledons</taxon>
        <taxon>Gunneridae</taxon>
        <taxon>Pentapetalae</taxon>
        <taxon>rosids</taxon>
        <taxon>malvids</taxon>
        <taxon>Brassicales</taxon>
        <taxon>Brassicaceae</taxon>
        <taxon>Camelineae</taxon>
        <taxon>Arabidopsis</taxon>
    </lineage>
</organism>
<accession>Q9FJ77</accession>
<accession>A0MFP3</accession>
<keyword id="KW-0012">Acyltransferase</keyword>
<keyword id="KW-0444">Lipid biosynthesis</keyword>
<keyword id="KW-0443">Lipid metabolism</keyword>
<keyword id="KW-0472">Membrane</keyword>
<keyword id="KW-1185">Reference proteome</keyword>
<keyword id="KW-0808">Transferase</keyword>
<keyword id="KW-0812">Transmembrane</keyword>
<keyword id="KW-1133">Transmembrane helix</keyword>
<protein>
    <recommendedName>
        <fullName>Probable long-chain-alcohol O-fatty-acyltransferase 6</fullName>
        <ecNumber>2.3.1.75</ecNumber>
    </recommendedName>
    <alternativeName>
        <fullName>Wax synthase 6</fullName>
    </alternativeName>
</protein>
<gene>
    <name type="primary">AT6</name>
    <name type="ordered locus">At5g55330</name>
    <name type="ORF">MTE17.4</name>
</gene>
<feature type="chain" id="PRO_0000380682" description="Probable long-chain-alcohol O-fatty-acyltransferase 6">
    <location>
        <begin position="1"/>
        <end position="346"/>
    </location>
</feature>
<feature type="transmembrane region" description="Helical" evidence="2">
    <location>
        <begin position="7"/>
        <end position="27"/>
    </location>
</feature>
<feature type="transmembrane region" description="Helical" evidence="2">
    <location>
        <begin position="36"/>
        <end position="56"/>
    </location>
</feature>
<feature type="transmembrane region" description="Helical" evidence="2">
    <location>
        <begin position="59"/>
        <end position="79"/>
    </location>
</feature>
<feature type="transmembrane region" description="Helical" evidence="2">
    <location>
        <begin position="116"/>
        <end position="136"/>
    </location>
</feature>
<feature type="transmembrane region" description="Helical" evidence="2">
    <location>
        <begin position="146"/>
        <end position="166"/>
    </location>
</feature>
<feature type="transmembrane region" description="Helical" evidence="2">
    <location>
        <begin position="228"/>
        <end position="248"/>
    </location>
</feature>
<feature type="transmembrane region" description="Helical" evidence="2">
    <location>
        <begin position="255"/>
        <end position="275"/>
    </location>
</feature>
<feature type="transmembrane region" description="Helical" evidence="2">
    <location>
        <begin position="289"/>
        <end position="309"/>
    </location>
</feature>
<reference key="1">
    <citation type="journal article" date="1998" name="DNA Res.">
        <title>Structural analysis of Arabidopsis thaliana chromosome 5. VII. Sequence features of the regions of 1,013,767 bp covered by sixteen physically assigned P1 and TAC clones.</title>
        <authorList>
            <person name="Nakamura Y."/>
            <person name="Sato S."/>
            <person name="Asamizu E."/>
            <person name="Kaneko T."/>
            <person name="Kotani H."/>
            <person name="Miyajima N."/>
            <person name="Tabata S."/>
        </authorList>
    </citation>
    <scope>NUCLEOTIDE SEQUENCE [LARGE SCALE GENOMIC DNA]</scope>
    <source>
        <strain>cv. Columbia</strain>
    </source>
</reference>
<reference key="2">
    <citation type="journal article" date="2017" name="Plant J.">
        <title>Araport11: a complete reannotation of the Arabidopsis thaliana reference genome.</title>
        <authorList>
            <person name="Cheng C.Y."/>
            <person name="Krishnakumar V."/>
            <person name="Chan A.P."/>
            <person name="Thibaud-Nissen F."/>
            <person name="Schobel S."/>
            <person name="Town C.D."/>
        </authorList>
    </citation>
    <scope>GENOME REANNOTATION</scope>
    <source>
        <strain>cv. Columbia</strain>
    </source>
</reference>
<reference key="3">
    <citation type="journal article" date="2006" name="Plant Biotechnol. J.">
        <title>Simultaneous high-throughput recombinational cloning of open reading frames in closed and open configurations.</title>
        <authorList>
            <person name="Underwood B.A."/>
            <person name="Vanderhaeghen R."/>
            <person name="Whitford R."/>
            <person name="Town C.D."/>
            <person name="Hilson P."/>
        </authorList>
    </citation>
    <scope>NUCLEOTIDE SEQUENCE [LARGE SCALE MRNA]</scope>
    <source>
        <strain>cv. Columbia</strain>
    </source>
</reference>
<reference key="4">
    <citation type="journal article" date="2000" name="Plant Physiol.">
        <title>Purification of a jojoba embryo wax synthase, cloning of its cDNA, and production of high levels of wax in seeds of transgenic arabidopsis.</title>
        <authorList>
            <person name="Lardizabal K.D."/>
            <person name="Metz J.G."/>
            <person name="Sakamoto T."/>
            <person name="Hutton W.C."/>
            <person name="Pollard M.R."/>
            <person name="Lassner M.W."/>
        </authorList>
    </citation>
    <scope>IDENTIFICATION</scope>
</reference>
<proteinExistence type="evidence at transcript level"/>
<dbReference type="EC" id="2.3.1.75"/>
<dbReference type="EMBL" id="AB015479">
    <property type="protein sequence ID" value="BAB08550.1"/>
    <property type="molecule type" value="Genomic_DNA"/>
</dbReference>
<dbReference type="EMBL" id="CP002688">
    <property type="protein sequence ID" value="AED96617.1"/>
    <property type="molecule type" value="Genomic_DNA"/>
</dbReference>
<dbReference type="EMBL" id="DQ447077">
    <property type="protein sequence ID" value="ABE66250.1"/>
    <property type="molecule type" value="mRNA"/>
</dbReference>
<dbReference type="EMBL" id="DQ653369">
    <property type="protein sequence ID" value="ABK28758.1"/>
    <property type="status" value="ALT_SEQ"/>
    <property type="molecule type" value="mRNA"/>
</dbReference>
<dbReference type="RefSeq" id="NP_200344.1">
    <property type="nucleotide sequence ID" value="NM_124915.2"/>
</dbReference>
<dbReference type="BioGRID" id="20870">
    <property type="interactions" value="19"/>
</dbReference>
<dbReference type="IntAct" id="Q9FJ77">
    <property type="interactions" value="13"/>
</dbReference>
<dbReference type="STRING" id="3702.Q9FJ77"/>
<dbReference type="PaxDb" id="3702-AT5G55330.1"/>
<dbReference type="EnsemblPlants" id="AT5G55330.1">
    <property type="protein sequence ID" value="AT5G55330.1"/>
    <property type="gene ID" value="AT5G55330"/>
</dbReference>
<dbReference type="GeneID" id="835626"/>
<dbReference type="Gramene" id="AT5G55330.1">
    <property type="protein sequence ID" value="AT5G55330.1"/>
    <property type="gene ID" value="AT5G55330"/>
</dbReference>
<dbReference type="KEGG" id="ath:AT5G55330"/>
<dbReference type="Araport" id="AT5G55330"/>
<dbReference type="TAIR" id="AT5G55330"/>
<dbReference type="HOGENOM" id="CLU_045902_0_0_1"/>
<dbReference type="InParanoid" id="Q9FJ77"/>
<dbReference type="OMA" id="VAHEILY"/>
<dbReference type="OrthoDB" id="1077582at2759"/>
<dbReference type="PhylomeDB" id="Q9FJ77"/>
<dbReference type="BioCyc" id="ARA:AT5G55330-MONOMER"/>
<dbReference type="BRENDA" id="2.3.1.75">
    <property type="organism ID" value="399"/>
</dbReference>
<dbReference type="PRO" id="PR:Q9FJ77"/>
<dbReference type="Proteomes" id="UP000006548">
    <property type="component" value="Chromosome 5"/>
</dbReference>
<dbReference type="ExpressionAtlas" id="Q9FJ77">
    <property type="expression patterns" value="baseline and differential"/>
</dbReference>
<dbReference type="GO" id="GO:0016020">
    <property type="term" value="C:membrane"/>
    <property type="evidence" value="ECO:0007669"/>
    <property type="project" value="UniProtKB-SubCell"/>
</dbReference>
<dbReference type="GO" id="GO:0009579">
    <property type="term" value="C:thylakoid"/>
    <property type="evidence" value="ECO:0007005"/>
    <property type="project" value="TAIR"/>
</dbReference>
<dbReference type="GO" id="GO:0047196">
    <property type="term" value="F:long-chain-alcohol O-fatty-acyltransferase activity"/>
    <property type="evidence" value="ECO:0007669"/>
    <property type="project" value="UniProtKB-EC"/>
</dbReference>
<dbReference type="GO" id="GO:0006629">
    <property type="term" value="P:lipid metabolic process"/>
    <property type="evidence" value="ECO:0007669"/>
    <property type="project" value="UniProtKB-KW"/>
</dbReference>
<dbReference type="InterPro" id="IPR044851">
    <property type="entry name" value="Wax_synthase"/>
</dbReference>
<dbReference type="InterPro" id="IPR032805">
    <property type="entry name" value="Wax_synthase_dom"/>
</dbReference>
<dbReference type="InterPro" id="IPR017088">
    <property type="entry name" value="Wax_synthase_Magnoliopsida"/>
</dbReference>
<dbReference type="PANTHER" id="PTHR31595">
    <property type="entry name" value="LONG-CHAIN-ALCOHOL O-FATTY-ACYLTRANSFERASE 3-RELATED"/>
    <property type="match status" value="1"/>
</dbReference>
<dbReference type="PANTHER" id="PTHR31595:SF70">
    <property type="entry name" value="LONG-CHAIN-ALCOHOL O-FATTY-ACYLTRANSFERASE 3-RELATED"/>
    <property type="match status" value="1"/>
</dbReference>
<dbReference type="Pfam" id="PF13813">
    <property type="entry name" value="MBOAT_2"/>
    <property type="match status" value="1"/>
</dbReference>
<dbReference type="PIRSF" id="PIRSF037006">
    <property type="entry name" value="Wax_synthase"/>
    <property type="match status" value="1"/>
</dbReference>
<comment type="function">
    <text evidence="1">Catalyzes the final step in the synthesis of long-chain linear esters (waxes).</text>
</comment>
<comment type="catalytic activity">
    <reaction>
        <text>a long chain fatty alcohol + a fatty acyl-CoA = a wax ester + CoA</text>
        <dbReference type="Rhea" id="RHEA:38443"/>
        <dbReference type="ChEBI" id="CHEBI:10036"/>
        <dbReference type="ChEBI" id="CHEBI:17135"/>
        <dbReference type="ChEBI" id="CHEBI:57287"/>
        <dbReference type="ChEBI" id="CHEBI:77636"/>
        <dbReference type="EC" id="2.3.1.75"/>
    </reaction>
</comment>
<comment type="subcellular location">
    <subcellularLocation>
        <location evidence="3">Membrane</location>
        <topology evidence="3">Multi-pass membrane protein</topology>
    </subcellularLocation>
</comment>
<comment type="similarity">
    <text evidence="3">Belongs to the wax synthase family.</text>
</comment>
<comment type="sequence caution" evidence="3">
    <conflict type="erroneous termination">
        <sequence resource="EMBL-CDS" id="ABK28758"/>
    </conflict>
    <text>Extended C-terminus.</text>
</comment>
<evidence type="ECO:0000250" key="1"/>
<evidence type="ECO:0000255" key="2"/>
<evidence type="ECO:0000305" key="3"/>
<name>WAXS6_ARATH</name>
<sequence length="346" mass="40395">MEEELKLFIQVWVSAIISVTYCYYLTPKIKTSLLRLLSVLPVCVLFLIIPIFFSTVHSSFTIAFFLSGLAVPKLILFALEKGPLFPLPPNLPHFVCFACFPIKLQKKPNPENTNHFPKWVFALKVFIFGALLLQAYHYKQFLSTNFLLGLYALHIYLELEISLTLIKFLVSITLGCDLEPQFNEPYLATSLHDFWGHRWNLMVSKILWLAVYNPIRQWRAKSSEWDRFFAIFATFLVSGVAHEILYFYLTREKPTWEVTWFFVLHGFCMAAEVALKRKTKLVQRWPVNPAVSRLLTVGFVFVTGVWLFSPQPIRHGLMERFINEDLFLIDFFNRKLYILLGLFTSL</sequence>